<proteinExistence type="predicted"/>
<keyword id="KW-0010">Activator</keyword>
<keyword id="KW-0238">DNA-binding</keyword>
<keyword id="KW-0614">Plasmid</keyword>
<keyword id="KW-0804">Transcription</keyword>
<keyword id="KW-0805">Transcription regulation</keyword>
<organism>
    <name type="scientific">Rhizobium radiobacter</name>
    <name type="common">Agrobacterium tumefaciens</name>
    <name type="synonym">Agrobacterium radiobacter</name>
    <dbReference type="NCBI Taxonomy" id="358"/>
    <lineage>
        <taxon>Bacteria</taxon>
        <taxon>Pseudomonadati</taxon>
        <taxon>Pseudomonadota</taxon>
        <taxon>Alphaproteobacteria</taxon>
        <taxon>Hyphomicrobiales</taxon>
        <taxon>Rhizobiaceae</taxon>
        <taxon>Rhizobium/Agrobacterium group</taxon>
        <taxon>Agrobacterium</taxon>
        <taxon>Agrobacterium tumefaciens complex</taxon>
    </lineage>
</organism>
<accession>Q44333</accession>
<sequence>MANSHKTDDLDHFDLKILEALSEDGRMSVLQLSKRVGLSKTPCQTRLKRLVDEGYILGFRAVLNPQKLGVDHIAFAEVKLSDTREKALEEFNTAVRKIKEVEECHMIAGAFDYLLKVRTSDIRKYRRVLGEKISSLPSVSNTSTFVVMQSVKETGI</sequence>
<comment type="function">
    <text>Transcriptional activator of the putA gene in response to proline.</text>
</comment>
<protein>
    <recommendedName>
        <fullName>Proline dehydrogenase transcriptional activator</fullName>
    </recommendedName>
</protein>
<geneLocation type="plasmid">
    <name>pAtR10</name>
</geneLocation>
<dbReference type="EMBL" id="U39263">
    <property type="protein sequence ID" value="AAC43979.1"/>
    <property type="molecule type" value="Genomic_DNA"/>
</dbReference>
<dbReference type="RefSeq" id="WP_004432060.1">
    <property type="nucleotide sequence ID" value="NZ_QRFG01000007.1"/>
</dbReference>
<dbReference type="SMR" id="Q44333"/>
<dbReference type="eggNOG" id="COG1522">
    <property type="taxonomic scope" value="Bacteria"/>
</dbReference>
<dbReference type="OrthoDB" id="9802341at2"/>
<dbReference type="GO" id="GO:0005829">
    <property type="term" value="C:cytosol"/>
    <property type="evidence" value="ECO:0007669"/>
    <property type="project" value="TreeGrafter"/>
</dbReference>
<dbReference type="GO" id="GO:0043565">
    <property type="term" value="F:sequence-specific DNA binding"/>
    <property type="evidence" value="ECO:0007669"/>
    <property type="project" value="InterPro"/>
</dbReference>
<dbReference type="GO" id="GO:0006524">
    <property type="term" value="P:alanine catabolic process"/>
    <property type="evidence" value="ECO:0007669"/>
    <property type="project" value="TreeGrafter"/>
</dbReference>
<dbReference type="GO" id="GO:0043201">
    <property type="term" value="P:response to L-leucine"/>
    <property type="evidence" value="ECO:0007669"/>
    <property type="project" value="TreeGrafter"/>
</dbReference>
<dbReference type="CDD" id="cd00090">
    <property type="entry name" value="HTH_ARSR"/>
    <property type="match status" value="1"/>
</dbReference>
<dbReference type="Gene3D" id="3.30.70.920">
    <property type="match status" value="1"/>
</dbReference>
<dbReference type="Gene3D" id="1.10.10.10">
    <property type="entry name" value="Winged helix-like DNA-binding domain superfamily/Winged helix DNA-binding domain"/>
    <property type="match status" value="1"/>
</dbReference>
<dbReference type="InterPro" id="IPR011991">
    <property type="entry name" value="ArsR-like_HTH"/>
</dbReference>
<dbReference type="InterPro" id="IPR000485">
    <property type="entry name" value="AsnC-type_HTH_dom"/>
</dbReference>
<dbReference type="InterPro" id="IPR011008">
    <property type="entry name" value="Dimeric_a/b-barrel"/>
</dbReference>
<dbReference type="InterPro" id="IPR019888">
    <property type="entry name" value="Tscrpt_reg_AsnC-like"/>
</dbReference>
<dbReference type="InterPro" id="IPR019887">
    <property type="entry name" value="Tscrpt_reg_AsnC/Lrp_C"/>
</dbReference>
<dbReference type="InterPro" id="IPR019885">
    <property type="entry name" value="Tscrpt_reg_HTH_AsnC-type_CS"/>
</dbReference>
<dbReference type="InterPro" id="IPR036388">
    <property type="entry name" value="WH-like_DNA-bd_sf"/>
</dbReference>
<dbReference type="InterPro" id="IPR036390">
    <property type="entry name" value="WH_DNA-bd_sf"/>
</dbReference>
<dbReference type="PANTHER" id="PTHR30154">
    <property type="entry name" value="LEUCINE-RESPONSIVE REGULATORY PROTEIN"/>
    <property type="match status" value="1"/>
</dbReference>
<dbReference type="PANTHER" id="PTHR30154:SF0">
    <property type="entry name" value="LEUCINE-RESPONSIVE REGULATORY PROTEIN"/>
    <property type="match status" value="1"/>
</dbReference>
<dbReference type="Pfam" id="PF01037">
    <property type="entry name" value="AsnC_trans_reg"/>
    <property type="match status" value="1"/>
</dbReference>
<dbReference type="Pfam" id="PF13412">
    <property type="entry name" value="HTH_24"/>
    <property type="match status" value="1"/>
</dbReference>
<dbReference type="PRINTS" id="PR00033">
    <property type="entry name" value="HTHASNC"/>
</dbReference>
<dbReference type="SMART" id="SM00344">
    <property type="entry name" value="HTH_ASNC"/>
    <property type="match status" value="1"/>
</dbReference>
<dbReference type="SUPFAM" id="SSF54909">
    <property type="entry name" value="Dimeric alpha+beta barrel"/>
    <property type="match status" value="1"/>
</dbReference>
<dbReference type="SUPFAM" id="SSF46785">
    <property type="entry name" value="Winged helix' DNA-binding domain"/>
    <property type="match status" value="1"/>
</dbReference>
<dbReference type="PROSITE" id="PS00519">
    <property type="entry name" value="HTH_ASNC_1"/>
    <property type="match status" value="1"/>
</dbReference>
<dbReference type="PROSITE" id="PS50956">
    <property type="entry name" value="HTH_ASNC_2"/>
    <property type="match status" value="1"/>
</dbReference>
<gene>
    <name type="primary">putR</name>
    <name type="synonym">prp</name>
</gene>
<name>PUTR_RHIRD</name>
<feature type="chain" id="PRO_0000111744" description="Proline dehydrogenase transcriptional activator">
    <location>
        <begin position="1"/>
        <end position="156"/>
    </location>
</feature>
<feature type="domain" description="HTH asnC-type" evidence="1">
    <location>
        <begin position="10"/>
        <end position="71"/>
    </location>
</feature>
<feature type="DNA-binding region" description="H-T-H motif" evidence="1">
    <location>
        <begin position="29"/>
        <end position="48"/>
    </location>
</feature>
<reference key="1">
    <citation type="journal article" date="1996" name="J. Bacteriol.">
        <title>Identification of Agrobacterium tumefaciens genes that direct the complete catabolism of octopine.</title>
        <authorList>
            <person name="Cho K."/>
            <person name="Fuqua C."/>
            <person name="Martin B.S."/>
            <person name="Winans S.C."/>
        </authorList>
    </citation>
    <scope>NUCLEOTIDE SEQUENCE [GENOMIC DNA]</scope>
    <source>
        <strain>R10</strain>
    </source>
</reference>
<evidence type="ECO:0000255" key="1">
    <source>
        <dbReference type="PROSITE-ProRule" id="PRU00319"/>
    </source>
</evidence>